<protein>
    <recommendedName>
        <fullName>Bacteriorhodopsin</fullName>
        <shortName>BR</shortName>
    </recommendedName>
</protein>
<accession>O93740</accession>
<gene>
    <name type="primary">bop</name>
</gene>
<reference key="1">
    <citation type="journal article" date="1999" name="J. Mol. Biol.">
        <title>Evolution of the archaeal rhodopsins: evolution rate changes by gene duplication and functional differentiation.</title>
        <authorList>
            <person name="Ihara K."/>
            <person name="Umemura T."/>
            <person name="Katagiri I."/>
            <person name="Kitajima-Ihara T."/>
            <person name="Sugiyama Y."/>
            <person name="Kimura Y."/>
            <person name="Mukohata Y."/>
        </authorList>
    </citation>
    <scope>NUCLEOTIDE SEQUENCE [GENOMIC DNA]</scope>
</reference>
<name>BACR_HALS4</name>
<keyword id="KW-1003">Cell membrane</keyword>
<keyword id="KW-0157">Chromophore</keyword>
<keyword id="KW-0375">Hydrogen ion transport</keyword>
<keyword id="KW-0406">Ion transport</keyword>
<keyword id="KW-0472">Membrane</keyword>
<keyword id="KW-0600">Photoreceptor protein</keyword>
<keyword id="KW-0675">Receptor</keyword>
<keyword id="KW-0681">Retinal protein</keyword>
<keyword id="KW-0716">Sensory transduction</keyword>
<keyword id="KW-0812">Transmembrane</keyword>
<keyword id="KW-1133">Transmembrane helix</keyword>
<keyword id="KW-0813">Transport</keyword>
<sequence>MCCAALAPPMAATVGPESIWLWIGTIGMTLGTLYFVGRGRGVRDRKMQEFYIITIFITTIAAAMYFAMATGFGVTEVMVGDEALTIYWARYADWLFTTPLLLLDLSLLAGANRNTIATLIGLDVFMIGTGAIAALSSTPGTRIAWWAISTGALLALLYVLVGTLSENARNRAPEVASLFGRLRNLVIALWFLYPVVWILGTEGTFGILPLYWETAAFMVLDLSAKVGFGVILLQSRSVLERVATPTAAPT</sequence>
<evidence type="ECO:0000250" key="1"/>
<evidence type="ECO:0000305" key="2"/>
<proteinExistence type="inferred from homology"/>
<comment type="function">
    <text>Light-driven proton pump.</text>
</comment>
<comment type="subcellular location">
    <subcellularLocation>
        <location>Cell membrane</location>
        <topology>Multi-pass membrane protein</topology>
    </subcellularLocation>
</comment>
<comment type="similarity">
    <text evidence="2">Belongs to the archaeal/bacterial/fungal opsin family.</text>
</comment>
<organism>
    <name type="scientific">Haloterrigena sp. (strain arg-4)</name>
    <dbReference type="NCBI Taxonomy" id="160432"/>
    <lineage>
        <taxon>Archaea</taxon>
        <taxon>Methanobacteriati</taxon>
        <taxon>Methanobacteriota</taxon>
        <taxon>Stenosarchaea group</taxon>
        <taxon>Halobacteria</taxon>
        <taxon>Halobacteriales</taxon>
        <taxon>Natrialbaceae</taxon>
        <taxon>Haloterrigena</taxon>
    </lineage>
</organism>
<dbReference type="EMBL" id="AB009620">
    <property type="protein sequence ID" value="BAA75200.1"/>
    <property type="molecule type" value="Genomic_DNA"/>
</dbReference>
<dbReference type="SMR" id="O93740"/>
<dbReference type="TCDB" id="3.E.1.1.7">
    <property type="family name" value="the ion-translocating microbial rhodopsin (mr) family"/>
</dbReference>
<dbReference type="GO" id="GO:0005886">
    <property type="term" value="C:plasma membrane"/>
    <property type="evidence" value="ECO:0007669"/>
    <property type="project" value="UniProtKB-SubCell"/>
</dbReference>
<dbReference type="GO" id="GO:0005216">
    <property type="term" value="F:monoatomic ion channel activity"/>
    <property type="evidence" value="ECO:0007669"/>
    <property type="project" value="InterPro"/>
</dbReference>
<dbReference type="GO" id="GO:0009881">
    <property type="term" value="F:photoreceptor activity"/>
    <property type="evidence" value="ECO:0007669"/>
    <property type="project" value="UniProtKB-KW"/>
</dbReference>
<dbReference type="GO" id="GO:0007602">
    <property type="term" value="P:phototransduction"/>
    <property type="evidence" value="ECO:0007669"/>
    <property type="project" value="UniProtKB-KW"/>
</dbReference>
<dbReference type="GO" id="GO:1902600">
    <property type="term" value="P:proton transmembrane transport"/>
    <property type="evidence" value="ECO:0007669"/>
    <property type="project" value="UniProtKB-KW"/>
</dbReference>
<dbReference type="CDD" id="cd15244">
    <property type="entry name" value="7tm_bacteriorhodopsin"/>
    <property type="match status" value="1"/>
</dbReference>
<dbReference type="Gene3D" id="1.20.1070.10">
    <property type="entry name" value="Rhodopsin 7-helix transmembrane proteins"/>
    <property type="match status" value="1"/>
</dbReference>
<dbReference type="InterPro" id="IPR001425">
    <property type="entry name" value="Arc/bac/fun_rhodopsins"/>
</dbReference>
<dbReference type="InterPro" id="IPR018229">
    <property type="entry name" value="Rhodopsin_retinal_BS"/>
</dbReference>
<dbReference type="PANTHER" id="PTHR28286">
    <property type="match status" value="1"/>
</dbReference>
<dbReference type="PANTHER" id="PTHR28286:SF2">
    <property type="entry name" value="BACTERIORHODOPSIN _OPSIN, NOPA (EUROFUNG)"/>
    <property type="match status" value="1"/>
</dbReference>
<dbReference type="Pfam" id="PF01036">
    <property type="entry name" value="Bac_rhodopsin"/>
    <property type="match status" value="1"/>
</dbReference>
<dbReference type="PRINTS" id="PR00251">
    <property type="entry name" value="BACTRLOPSIN"/>
</dbReference>
<dbReference type="SMART" id="SM01021">
    <property type="entry name" value="Bac_rhodopsin"/>
    <property type="match status" value="1"/>
</dbReference>
<dbReference type="SUPFAM" id="SSF81321">
    <property type="entry name" value="Family A G protein-coupled receptor-like"/>
    <property type="match status" value="1"/>
</dbReference>
<dbReference type="PROSITE" id="PS00950">
    <property type="entry name" value="BACTERIAL_OPSIN_1"/>
    <property type="match status" value="1"/>
</dbReference>
<dbReference type="PROSITE" id="PS00327">
    <property type="entry name" value="BACTERIAL_OPSIN_RET"/>
    <property type="match status" value="1"/>
</dbReference>
<feature type="chain" id="PRO_0000196272" description="Bacteriorhodopsin">
    <location>
        <begin position="1"/>
        <end position="250"/>
    </location>
</feature>
<feature type="topological domain" description="Extracellular" evidence="1">
    <location>
        <begin position="1"/>
        <end position="18"/>
    </location>
</feature>
<feature type="transmembrane region" description="Helical; Name=Helix A" evidence="1">
    <location>
        <begin position="19"/>
        <end position="37"/>
    </location>
</feature>
<feature type="topological domain" description="Cytoplasmic" evidence="1">
    <location>
        <begin position="38"/>
        <end position="51"/>
    </location>
</feature>
<feature type="transmembrane region" description="Helical; Name=Helix B" evidence="1">
    <location>
        <begin position="52"/>
        <end position="70"/>
    </location>
</feature>
<feature type="topological domain" description="Extracellular" evidence="1">
    <location>
        <begin position="71"/>
        <end position="86"/>
    </location>
</feature>
<feature type="transmembrane region" description="Helical; Name=Helix C" evidence="1">
    <location>
        <begin position="87"/>
        <end position="104"/>
    </location>
</feature>
<feature type="topological domain" description="Cytoplasmic" evidence="1">
    <location>
        <begin position="105"/>
        <end position="115"/>
    </location>
</feature>
<feature type="transmembrane region" description="Helical; Name=Helix D" evidence="1">
    <location>
        <begin position="116"/>
        <end position="135"/>
    </location>
</feature>
<feature type="topological domain" description="Extracellular" evidence="1">
    <location>
        <begin position="136"/>
        <end position="142"/>
    </location>
</feature>
<feature type="transmembrane region" description="Helical; Name=Helix E" evidence="1">
    <location>
        <begin position="143"/>
        <end position="162"/>
    </location>
</feature>
<feature type="topological domain" description="Cytoplasmic" evidence="1">
    <location>
        <begin position="163"/>
        <end position="180"/>
    </location>
</feature>
<feature type="transmembrane region" description="Helical; Name=Helix F" evidence="1">
    <location>
        <begin position="181"/>
        <end position="199"/>
    </location>
</feature>
<feature type="topological domain" description="Extracellular" evidence="1">
    <location>
        <begin position="200"/>
        <end position="212"/>
    </location>
</feature>
<feature type="transmembrane region" description="Helical; Name=Helix G" evidence="1">
    <location>
        <begin position="213"/>
        <end position="232"/>
    </location>
</feature>
<feature type="topological domain" description="Cytoplasmic" evidence="1">
    <location>
        <begin position="233"/>
        <end position="250"/>
    </location>
</feature>
<feature type="site" description="Primary proton acceptor" evidence="1">
    <location>
        <position position="93"/>
    </location>
</feature>
<feature type="modified residue" description="N6-(retinylidene)lysine" evidence="1">
    <location>
        <position position="225"/>
    </location>
</feature>